<sequence>MARVTVEDCIDKVDNRFELVLLAGHRARQISQGAQVTVDRDNDKNPVVALREIAEETLSPADLKEDLIHSLQKHVEVDEPEMANEFLSHSGEAETVFATTSEEESCSFDCMSEEDLLAGIEGLVIPEKSDDY</sequence>
<name>RPOZ_BARQU</name>
<keyword id="KW-0240">DNA-directed RNA polymerase</keyword>
<keyword id="KW-0548">Nucleotidyltransferase</keyword>
<keyword id="KW-0804">Transcription</keyword>
<keyword id="KW-0808">Transferase</keyword>
<comment type="function">
    <text evidence="1">Promotes RNA polymerase assembly. Latches the N- and C-terminal regions of the beta' subunit thereby facilitating its interaction with the beta and alpha subunits.</text>
</comment>
<comment type="catalytic activity">
    <reaction evidence="1">
        <text>RNA(n) + a ribonucleoside 5'-triphosphate = RNA(n+1) + diphosphate</text>
        <dbReference type="Rhea" id="RHEA:21248"/>
        <dbReference type="Rhea" id="RHEA-COMP:14527"/>
        <dbReference type="Rhea" id="RHEA-COMP:17342"/>
        <dbReference type="ChEBI" id="CHEBI:33019"/>
        <dbReference type="ChEBI" id="CHEBI:61557"/>
        <dbReference type="ChEBI" id="CHEBI:140395"/>
        <dbReference type="EC" id="2.7.7.6"/>
    </reaction>
</comment>
<comment type="subunit">
    <text evidence="1">The RNAP catalytic core consists of 2 alpha, 1 beta, 1 beta' and 1 omega subunit. When a sigma factor is associated with the core the holoenzyme is formed, which can initiate transcription.</text>
</comment>
<comment type="similarity">
    <text evidence="1">Belongs to the RNA polymerase subunit omega family.</text>
</comment>
<reference key="1">
    <citation type="journal article" date="2004" name="Proc. Natl. Acad. Sci. U.S.A.">
        <title>The louse-borne human pathogen Bartonella quintana is a genomic derivative of the zoonotic agent Bartonella henselae.</title>
        <authorList>
            <person name="Alsmark U.C.M."/>
            <person name="Frank A.C."/>
            <person name="Karlberg E.O."/>
            <person name="Legault B.-A."/>
            <person name="Ardell D.H."/>
            <person name="Canbaeck B."/>
            <person name="Eriksson A.-S."/>
            <person name="Naeslund A.K."/>
            <person name="Handley S.A."/>
            <person name="Huvet M."/>
            <person name="La Scola B."/>
            <person name="Holmberg M."/>
            <person name="Andersson S.G.E."/>
        </authorList>
    </citation>
    <scope>NUCLEOTIDE SEQUENCE [LARGE SCALE GENOMIC DNA]</scope>
    <source>
        <strain>Toulouse</strain>
    </source>
</reference>
<protein>
    <recommendedName>
        <fullName evidence="1">DNA-directed RNA polymerase subunit omega</fullName>
        <shortName evidence="1">RNAP omega subunit</shortName>
        <ecNumber evidence="1">2.7.7.6</ecNumber>
    </recommendedName>
    <alternativeName>
        <fullName evidence="1">RNA polymerase omega subunit</fullName>
    </alternativeName>
    <alternativeName>
        <fullName evidence="1">Transcriptase subunit omega</fullName>
    </alternativeName>
</protein>
<gene>
    <name evidence="1" type="primary">rpoZ</name>
    <name type="ordered locus">BQ04220</name>
</gene>
<accession>Q6G088</accession>
<organism>
    <name type="scientific">Bartonella quintana (strain Toulouse)</name>
    <name type="common">Rochalimaea quintana</name>
    <dbReference type="NCBI Taxonomy" id="283165"/>
    <lineage>
        <taxon>Bacteria</taxon>
        <taxon>Pseudomonadati</taxon>
        <taxon>Pseudomonadota</taxon>
        <taxon>Alphaproteobacteria</taxon>
        <taxon>Hyphomicrobiales</taxon>
        <taxon>Bartonellaceae</taxon>
        <taxon>Bartonella</taxon>
    </lineage>
</organism>
<feature type="chain" id="PRO_0000237436" description="DNA-directed RNA polymerase subunit omega">
    <location>
        <begin position="1"/>
        <end position="132"/>
    </location>
</feature>
<proteinExistence type="inferred from homology"/>
<dbReference type="EC" id="2.7.7.6" evidence="1"/>
<dbReference type="EMBL" id="BX897700">
    <property type="protein sequence ID" value="CAF25921.1"/>
    <property type="molecule type" value="Genomic_DNA"/>
</dbReference>
<dbReference type="RefSeq" id="WP_011179210.1">
    <property type="nucleotide sequence ID" value="NC_005955.1"/>
</dbReference>
<dbReference type="SMR" id="Q6G088"/>
<dbReference type="KEGG" id="bqu:BQ04220"/>
<dbReference type="eggNOG" id="COG1758">
    <property type="taxonomic scope" value="Bacteria"/>
</dbReference>
<dbReference type="HOGENOM" id="CLU_125406_2_0_5"/>
<dbReference type="OrthoDB" id="9796300at2"/>
<dbReference type="Proteomes" id="UP000000597">
    <property type="component" value="Chromosome"/>
</dbReference>
<dbReference type="GO" id="GO:0000428">
    <property type="term" value="C:DNA-directed RNA polymerase complex"/>
    <property type="evidence" value="ECO:0007669"/>
    <property type="project" value="UniProtKB-KW"/>
</dbReference>
<dbReference type="GO" id="GO:0003677">
    <property type="term" value="F:DNA binding"/>
    <property type="evidence" value="ECO:0007669"/>
    <property type="project" value="UniProtKB-UniRule"/>
</dbReference>
<dbReference type="GO" id="GO:0003899">
    <property type="term" value="F:DNA-directed RNA polymerase activity"/>
    <property type="evidence" value="ECO:0007669"/>
    <property type="project" value="UniProtKB-UniRule"/>
</dbReference>
<dbReference type="GO" id="GO:0006351">
    <property type="term" value="P:DNA-templated transcription"/>
    <property type="evidence" value="ECO:0007669"/>
    <property type="project" value="UniProtKB-UniRule"/>
</dbReference>
<dbReference type="Gene3D" id="3.90.940.10">
    <property type="match status" value="1"/>
</dbReference>
<dbReference type="HAMAP" id="MF_00366">
    <property type="entry name" value="RNApol_bact_RpoZ"/>
    <property type="match status" value="1"/>
</dbReference>
<dbReference type="InterPro" id="IPR003716">
    <property type="entry name" value="DNA-dir_RNA_pol_omega"/>
</dbReference>
<dbReference type="InterPro" id="IPR006110">
    <property type="entry name" value="Pol_omega/Rpo6/RPB6"/>
</dbReference>
<dbReference type="InterPro" id="IPR036161">
    <property type="entry name" value="RPB6/omega-like_sf"/>
</dbReference>
<dbReference type="NCBIfam" id="TIGR00690">
    <property type="entry name" value="rpoZ"/>
    <property type="match status" value="1"/>
</dbReference>
<dbReference type="PANTHER" id="PTHR34476">
    <property type="entry name" value="DNA-DIRECTED RNA POLYMERASE SUBUNIT OMEGA"/>
    <property type="match status" value="1"/>
</dbReference>
<dbReference type="PANTHER" id="PTHR34476:SF1">
    <property type="entry name" value="DNA-DIRECTED RNA POLYMERASE SUBUNIT OMEGA"/>
    <property type="match status" value="1"/>
</dbReference>
<dbReference type="Pfam" id="PF01192">
    <property type="entry name" value="RNA_pol_Rpb6"/>
    <property type="match status" value="1"/>
</dbReference>
<dbReference type="SMART" id="SM01409">
    <property type="entry name" value="RNA_pol_Rpb6"/>
    <property type="match status" value="1"/>
</dbReference>
<dbReference type="SUPFAM" id="SSF63562">
    <property type="entry name" value="RPB6/omega subunit-like"/>
    <property type="match status" value="1"/>
</dbReference>
<evidence type="ECO:0000255" key="1">
    <source>
        <dbReference type="HAMAP-Rule" id="MF_00366"/>
    </source>
</evidence>